<protein>
    <recommendedName>
        <fullName evidence="1">Elongation factor Ts</fullName>
        <shortName evidence="1">EF-Ts</shortName>
    </recommendedName>
</protein>
<dbReference type="EMBL" id="CP001033">
    <property type="protein sequence ID" value="ACB91432.1"/>
    <property type="molecule type" value="Genomic_DNA"/>
</dbReference>
<dbReference type="RefSeq" id="WP_000808063.1">
    <property type="nucleotide sequence ID" value="NC_010582.1"/>
</dbReference>
<dbReference type="SMR" id="B2INN1"/>
<dbReference type="GeneID" id="45652566"/>
<dbReference type="KEGG" id="spw:SPCG_2180"/>
<dbReference type="HOGENOM" id="CLU_047155_0_1_9"/>
<dbReference type="GO" id="GO:0005737">
    <property type="term" value="C:cytoplasm"/>
    <property type="evidence" value="ECO:0007669"/>
    <property type="project" value="UniProtKB-SubCell"/>
</dbReference>
<dbReference type="GO" id="GO:0003746">
    <property type="term" value="F:translation elongation factor activity"/>
    <property type="evidence" value="ECO:0007669"/>
    <property type="project" value="UniProtKB-UniRule"/>
</dbReference>
<dbReference type="CDD" id="cd14275">
    <property type="entry name" value="UBA_EF-Ts"/>
    <property type="match status" value="1"/>
</dbReference>
<dbReference type="FunFam" id="1.10.286.20:FF:000004">
    <property type="entry name" value="Elongation factor Ts"/>
    <property type="match status" value="1"/>
</dbReference>
<dbReference type="FunFam" id="1.10.8.10:FF:000001">
    <property type="entry name" value="Elongation factor Ts"/>
    <property type="match status" value="1"/>
</dbReference>
<dbReference type="FunFam" id="3.30.479.20:FF:000009">
    <property type="entry name" value="Elongation factor Ts"/>
    <property type="match status" value="1"/>
</dbReference>
<dbReference type="FunFam" id="3.30.479.20:FF:000013">
    <property type="entry name" value="Elongation factor Ts"/>
    <property type="match status" value="1"/>
</dbReference>
<dbReference type="FunFam" id="3.30.479.20:FF:000016">
    <property type="entry name" value="Elongation factor Ts"/>
    <property type="match status" value="1"/>
</dbReference>
<dbReference type="Gene3D" id="1.10.286.20">
    <property type="match status" value="1"/>
</dbReference>
<dbReference type="Gene3D" id="1.10.8.10">
    <property type="entry name" value="DNA helicase RuvA subunit, C-terminal domain"/>
    <property type="match status" value="1"/>
</dbReference>
<dbReference type="Gene3D" id="3.30.479.20">
    <property type="entry name" value="Elongation factor Ts, dimerisation domain"/>
    <property type="match status" value="2"/>
</dbReference>
<dbReference type="HAMAP" id="MF_00050">
    <property type="entry name" value="EF_Ts"/>
    <property type="match status" value="1"/>
</dbReference>
<dbReference type="InterPro" id="IPR036402">
    <property type="entry name" value="EF-Ts_dimer_sf"/>
</dbReference>
<dbReference type="InterPro" id="IPR001816">
    <property type="entry name" value="Transl_elong_EFTs/EF1B"/>
</dbReference>
<dbReference type="InterPro" id="IPR014039">
    <property type="entry name" value="Transl_elong_EFTs/EF1B_dimer"/>
</dbReference>
<dbReference type="InterPro" id="IPR018101">
    <property type="entry name" value="Transl_elong_Ts_CS"/>
</dbReference>
<dbReference type="InterPro" id="IPR009060">
    <property type="entry name" value="UBA-like_sf"/>
</dbReference>
<dbReference type="NCBIfam" id="TIGR00116">
    <property type="entry name" value="tsf"/>
    <property type="match status" value="1"/>
</dbReference>
<dbReference type="PANTHER" id="PTHR11741">
    <property type="entry name" value="ELONGATION FACTOR TS"/>
    <property type="match status" value="1"/>
</dbReference>
<dbReference type="PANTHER" id="PTHR11741:SF0">
    <property type="entry name" value="ELONGATION FACTOR TS, MITOCHONDRIAL"/>
    <property type="match status" value="1"/>
</dbReference>
<dbReference type="Pfam" id="PF00889">
    <property type="entry name" value="EF_TS"/>
    <property type="match status" value="1"/>
</dbReference>
<dbReference type="SUPFAM" id="SSF54713">
    <property type="entry name" value="Elongation factor Ts (EF-Ts), dimerisation domain"/>
    <property type="match status" value="2"/>
</dbReference>
<dbReference type="SUPFAM" id="SSF46934">
    <property type="entry name" value="UBA-like"/>
    <property type="match status" value="1"/>
</dbReference>
<dbReference type="PROSITE" id="PS01126">
    <property type="entry name" value="EF_TS_1"/>
    <property type="match status" value="1"/>
</dbReference>
<dbReference type="PROSITE" id="PS01127">
    <property type="entry name" value="EF_TS_2"/>
    <property type="match status" value="1"/>
</dbReference>
<gene>
    <name evidence="1" type="primary">tsf</name>
    <name type="ordered locus">SPCG_2180</name>
</gene>
<feature type="chain" id="PRO_1000189880" description="Elongation factor Ts">
    <location>
        <begin position="1"/>
        <end position="346"/>
    </location>
</feature>
<feature type="region of interest" description="Involved in Mg(2+) ion dislocation from EF-Tu" evidence="1">
    <location>
        <begin position="80"/>
        <end position="83"/>
    </location>
</feature>
<evidence type="ECO:0000255" key="1">
    <source>
        <dbReference type="HAMAP-Rule" id="MF_00050"/>
    </source>
</evidence>
<comment type="function">
    <text evidence="1">Associates with the EF-Tu.GDP complex and induces the exchange of GDP to GTP. It remains bound to the aminoacyl-tRNA.EF-Tu.GTP complex up to the GTP hydrolysis stage on the ribosome.</text>
</comment>
<comment type="subcellular location">
    <subcellularLocation>
        <location evidence="1">Cytoplasm</location>
    </subcellularLocation>
</comment>
<comment type="similarity">
    <text evidence="1">Belongs to the EF-Ts family.</text>
</comment>
<name>EFTS_STRPS</name>
<keyword id="KW-0963">Cytoplasm</keyword>
<keyword id="KW-0251">Elongation factor</keyword>
<keyword id="KW-0648">Protein biosynthesis</keyword>
<organism>
    <name type="scientific">Streptococcus pneumoniae (strain CGSP14)</name>
    <dbReference type="NCBI Taxonomy" id="516950"/>
    <lineage>
        <taxon>Bacteria</taxon>
        <taxon>Bacillati</taxon>
        <taxon>Bacillota</taxon>
        <taxon>Bacilli</taxon>
        <taxon>Lactobacillales</taxon>
        <taxon>Streptococcaceae</taxon>
        <taxon>Streptococcus</taxon>
    </lineage>
</organism>
<accession>B2INN1</accession>
<sequence length="346" mass="37362">MAEITAKLVKELREKSGAGVMDAKKALVETDGDIEKAIELLREKGMAKAAKKADRVAAEGLTGVYVNGNVAAVIEVNAETDFVAKNAQFVELVNTTAKVIAEGKPANNEEALALIMPSGETLEAAYVSATATIGEKISFRRFALIEKTDAQHFGAYQHNGGRIGVISVVEGGDEALAKQLSMHIAAMKPTVLSYKELDEQFVKDELAQLNHVIDQDNESRAMVNKPALPHLKYGSKAQLTDDVIAQAEADIKAELAAEGKPEKIWDKIIPGKMDRFMLDNTKVDQAYTLLAQVYIMDDSKTVEAYLESVNASVVEFARFEVGEGIEKAANDFEAEVAATMAAALNN</sequence>
<reference key="1">
    <citation type="journal article" date="2009" name="BMC Genomics">
        <title>Genome evolution driven by host adaptations results in a more virulent and antimicrobial-resistant Streptococcus pneumoniae serotype 14.</title>
        <authorList>
            <person name="Ding F."/>
            <person name="Tang P."/>
            <person name="Hsu M.-H."/>
            <person name="Cui P."/>
            <person name="Hu S."/>
            <person name="Yu J."/>
            <person name="Chiu C.-H."/>
        </authorList>
    </citation>
    <scope>NUCLEOTIDE SEQUENCE [LARGE SCALE GENOMIC DNA]</scope>
    <source>
        <strain>CGSP14</strain>
    </source>
</reference>
<proteinExistence type="inferred from homology"/>